<keyword id="KW-0687">Ribonucleoprotein</keyword>
<keyword id="KW-0689">Ribosomal protein</keyword>
<gene>
    <name evidence="1" type="primary">rpmA</name>
    <name type="ordered locus">CTLon_0672</name>
</gene>
<reference key="1">
    <citation type="journal article" date="2008" name="Genome Res.">
        <title>Chlamydia trachomatis: genome sequence analysis of lymphogranuloma venereum isolates.</title>
        <authorList>
            <person name="Thomson N.R."/>
            <person name="Holden M.T.G."/>
            <person name="Carder C."/>
            <person name="Lennard N."/>
            <person name="Lockey S.J."/>
            <person name="Marsh P."/>
            <person name="Skipp P."/>
            <person name="O'Connor C.D."/>
            <person name="Goodhead I."/>
            <person name="Norbertzcak H."/>
            <person name="Harris B."/>
            <person name="Ormond D."/>
            <person name="Rance R."/>
            <person name="Quail M.A."/>
            <person name="Parkhill J."/>
            <person name="Stephens R.S."/>
            <person name="Clarke I.N."/>
        </authorList>
    </citation>
    <scope>NUCLEOTIDE SEQUENCE [LARGE SCALE GENOMIC DNA]</scope>
    <source>
        <strain>UCH-1/proctitis</strain>
    </source>
</reference>
<protein>
    <recommendedName>
        <fullName evidence="1">Large ribosomal subunit protein bL27</fullName>
    </recommendedName>
    <alternativeName>
        <fullName evidence="3">50S ribosomal protein L27</fullName>
    </alternativeName>
</protein>
<name>RL27_CHLTB</name>
<proteinExistence type="inferred from homology"/>
<dbReference type="EMBL" id="AM884177">
    <property type="protein sequence ID" value="CAP07069.1"/>
    <property type="molecule type" value="Genomic_DNA"/>
</dbReference>
<dbReference type="RefSeq" id="WP_009873798.1">
    <property type="nucleotide sequence ID" value="NC_010280.2"/>
</dbReference>
<dbReference type="SMR" id="B0BC54"/>
<dbReference type="KEGG" id="ctl:CTLon_0672"/>
<dbReference type="HOGENOM" id="CLU_095424_4_0_0"/>
<dbReference type="Proteomes" id="UP001154401">
    <property type="component" value="Chromosome"/>
</dbReference>
<dbReference type="GO" id="GO:0022625">
    <property type="term" value="C:cytosolic large ribosomal subunit"/>
    <property type="evidence" value="ECO:0007669"/>
    <property type="project" value="TreeGrafter"/>
</dbReference>
<dbReference type="GO" id="GO:0003735">
    <property type="term" value="F:structural constituent of ribosome"/>
    <property type="evidence" value="ECO:0007669"/>
    <property type="project" value="InterPro"/>
</dbReference>
<dbReference type="GO" id="GO:0006412">
    <property type="term" value="P:translation"/>
    <property type="evidence" value="ECO:0007669"/>
    <property type="project" value="UniProtKB-UniRule"/>
</dbReference>
<dbReference type="FunFam" id="2.40.50.100:FF:000020">
    <property type="entry name" value="50S ribosomal protein L27"/>
    <property type="match status" value="1"/>
</dbReference>
<dbReference type="Gene3D" id="2.40.50.100">
    <property type="match status" value="1"/>
</dbReference>
<dbReference type="HAMAP" id="MF_00539">
    <property type="entry name" value="Ribosomal_bL27"/>
    <property type="match status" value="1"/>
</dbReference>
<dbReference type="InterPro" id="IPR001684">
    <property type="entry name" value="Ribosomal_bL27"/>
</dbReference>
<dbReference type="NCBIfam" id="TIGR00062">
    <property type="entry name" value="L27"/>
    <property type="match status" value="1"/>
</dbReference>
<dbReference type="PANTHER" id="PTHR15893:SF0">
    <property type="entry name" value="LARGE RIBOSOMAL SUBUNIT PROTEIN BL27M"/>
    <property type="match status" value="1"/>
</dbReference>
<dbReference type="PANTHER" id="PTHR15893">
    <property type="entry name" value="RIBOSOMAL PROTEIN L27"/>
    <property type="match status" value="1"/>
</dbReference>
<dbReference type="Pfam" id="PF01016">
    <property type="entry name" value="Ribosomal_L27"/>
    <property type="match status" value="1"/>
</dbReference>
<dbReference type="PRINTS" id="PR00063">
    <property type="entry name" value="RIBOSOMALL27"/>
</dbReference>
<dbReference type="SUPFAM" id="SSF110324">
    <property type="entry name" value="Ribosomal L27 protein-like"/>
    <property type="match status" value="1"/>
</dbReference>
<organism>
    <name type="scientific">Chlamydia trachomatis serovar L2b (strain UCH-1/proctitis)</name>
    <dbReference type="NCBI Taxonomy" id="471473"/>
    <lineage>
        <taxon>Bacteria</taxon>
        <taxon>Pseudomonadati</taxon>
        <taxon>Chlamydiota</taxon>
        <taxon>Chlamydiia</taxon>
        <taxon>Chlamydiales</taxon>
        <taxon>Chlamydiaceae</taxon>
        <taxon>Chlamydia/Chlamydophila group</taxon>
        <taxon>Chlamydia</taxon>
    </lineage>
</organism>
<sequence>MAHKKGQGASRNGRDSESKRLGLKVGAGQRVSTGSILVRQRGTKWHPAVNVGRGKDDTLFALADGIVVMKKTDRTYVSVIPQA</sequence>
<evidence type="ECO:0000255" key="1">
    <source>
        <dbReference type="HAMAP-Rule" id="MF_00539"/>
    </source>
</evidence>
<evidence type="ECO:0000256" key="2">
    <source>
        <dbReference type="SAM" id="MobiDB-lite"/>
    </source>
</evidence>
<evidence type="ECO:0000305" key="3"/>
<accession>B0BC54</accession>
<comment type="similarity">
    <text evidence="1">Belongs to the bacterial ribosomal protein bL27 family.</text>
</comment>
<feature type="chain" id="PRO_1000128718" description="Large ribosomal subunit protein bL27">
    <location>
        <begin position="1"/>
        <end position="83"/>
    </location>
</feature>
<feature type="region of interest" description="Disordered" evidence="2">
    <location>
        <begin position="1"/>
        <end position="25"/>
    </location>
</feature>